<reference key="1">
    <citation type="journal article" date="1993" name="Plant Mol. Biol.">
        <title>Activation of anthocyanin synthesis genes by white light in eggplant hypocotyl tissues, and identification of an inducible P-450 cDNA.</title>
        <authorList>
            <person name="Toguri T."/>
            <person name="Umemoto N."/>
            <person name="Kobayashi O."/>
            <person name="Ohtani T."/>
        </authorList>
    </citation>
    <scope>NUCLEOTIDE SEQUENCE [MRNA]</scope>
    <source>
        <strain>cv. Sinsadoharanasu</strain>
        <tissue>Hypocotyl</tissue>
    </source>
</reference>
<dbReference type="EC" id="1.14.14.81" evidence="2"/>
<dbReference type="EMBL" id="X70824">
    <property type="protein sequence ID" value="CAA50155.1"/>
    <property type="molecule type" value="mRNA"/>
</dbReference>
<dbReference type="PIR" id="S43342">
    <property type="entry name" value="S43342"/>
</dbReference>
<dbReference type="SMR" id="P37120"/>
<dbReference type="BRENDA" id="1.14.14.81">
    <property type="organism ID" value="5755"/>
</dbReference>
<dbReference type="UniPathway" id="UPA00009"/>
<dbReference type="GO" id="GO:0033772">
    <property type="term" value="F:flavonoid 3',5'-hydroxylase activity"/>
    <property type="evidence" value="ECO:0007669"/>
    <property type="project" value="UniProtKB-EC"/>
</dbReference>
<dbReference type="GO" id="GO:0020037">
    <property type="term" value="F:heme binding"/>
    <property type="evidence" value="ECO:0007669"/>
    <property type="project" value="InterPro"/>
</dbReference>
<dbReference type="GO" id="GO:0005506">
    <property type="term" value="F:iron ion binding"/>
    <property type="evidence" value="ECO:0007669"/>
    <property type="project" value="InterPro"/>
</dbReference>
<dbReference type="GO" id="GO:0009718">
    <property type="term" value="P:anthocyanin-containing compound biosynthetic process"/>
    <property type="evidence" value="ECO:0007669"/>
    <property type="project" value="UniProtKB-UniPathway"/>
</dbReference>
<dbReference type="CDD" id="cd20657">
    <property type="entry name" value="CYP75"/>
    <property type="match status" value="1"/>
</dbReference>
<dbReference type="FunFam" id="1.10.630.10:FF:000111">
    <property type="entry name" value="Flavonoid 3',5'-hydroxylase 2"/>
    <property type="match status" value="1"/>
</dbReference>
<dbReference type="Gene3D" id="1.10.630.10">
    <property type="entry name" value="Cytochrome P450"/>
    <property type="match status" value="1"/>
</dbReference>
<dbReference type="InterPro" id="IPR001128">
    <property type="entry name" value="Cyt_P450"/>
</dbReference>
<dbReference type="InterPro" id="IPR017972">
    <property type="entry name" value="Cyt_P450_CS"/>
</dbReference>
<dbReference type="InterPro" id="IPR002401">
    <property type="entry name" value="Cyt_P450_E_grp-I"/>
</dbReference>
<dbReference type="InterPro" id="IPR036396">
    <property type="entry name" value="Cyt_P450_sf"/>
</dbReference>
<dbReference type="PANTHER" id="PTHR47944">
    <property type="entry name" value="CYTOCHROME P450 98A9"/>
    <property type="match status" value="1"/>
</dbReference>
<dbReference type="PANTHER" id="PTHR47944:SF18">
    <property type="entry name" value="FLAVONOID 3'-MONOOXYGENASE"/>
    <property type="match status" value="1"/>
</dbReference>
<dbReference type="Pfam" id="PF00067">
    <property type="entry name" value="p450"/>
    <property type="match status" value="1"/>
</dbReference>
<dbReference type="PRINTS" id="PR00463">
    <property type="entry name" value="EP450I"/>
</dbReference>
<dbReference type="PRINTS" id="PR00385">
    <property type="entry name" value="P450"/>
</dbReference>
<dbReference type="SUPFAM" id="SSF48264">
    <property type="entry name" value="Cytochrome P450"/>
    <property type="match status" value="1"/>
</dbReference>
<dbReference type="PROSITE" id="PS00086">
    <property type="entry name" value="CYTOCHROME_P450"/>
    <property type="match status" value="1"/>
</dbReference>
<gene>
    <name type="primary">CYP75A2</name>
    <name type="synonym">CYP75</name>
    <name type="synonym">CYPEG1</name>
</gene>
<organism>
    <name type="scientific">Solanum melongena</name>
    <name type="common">Eggplant</name>
    <name type="synonym">Aubergine</name>
    <dbReference type="NCBI Taxonomy" id="223891"/>
    <lineage>
        <taxon>Eukaryota</taxon>
        <taxon>Viridiplantae</taxon>
        <taxon>Streptophyta</taxon>
        <taxon>Embryophyta</taxon>
        <taxon>Tracheophyta</taxon>
        <taxon>Spermatophyta</taxon>
        <taxon>Magnoliopsida</taxon>
        <taxon>eudicotyledons</taxon>
        <taxon>Gunneridae</taxon>
        <taxon>Pentapetalae</taxon>
        <taxon>asterids</taxon>
        <taxon>lamiids</taxon>
        <taxon>Solanales</taxon>
        <taxon>Solanaceae</taxon>
        <taxon>Solanoideae</taxon>
        <taxon>Solaneae</taxon>
        <taxon>Solanum</taxon>
    </lineage>
</organism>
<accession>P37120</accession>
<protein>
    <recommendedName>
        <fullName>Flavonoid 3',5'-hydroxylase</fullName>
        <shortName>F3'5'H</shortName>
        <ecNumber evidence="2">1.14.14.81</ecNumber>
    </recommendedName>
    <alternativeName>
        <fullName>CYPLXXVA2</fullName>
    </alternativeName>
    <alternativeName>
        <fullName>Cytochrome P450 75A2</fullName>
    </alternativeName>
    <alternativeName>
        <fullName>P-450EG1</fullName>
    </alternativeName>
</protein>
<comment type="function">
    <text evidence="2">Catalyzes the 3'5'-hydroxylation of naringenin and eriodictyol to form 5,7,3,'4',5'-pentahydroxyflavanone and 3',5'-hydroxylation of dihydrokaempferol and dihydroquercetin to form dihydromyricetin.</text>
</comment>
<comment type="catalytic activity">
    <reaction evidence="2">
        <text>a 3',5'-unsubstituted flavanone + 2 reduced [NADPH--hemoprotein reductase] + 2 O2 = a 3',5'-dihydroxyflavanone + 2 oxidized [NADPH--hemoprotein reductase] + 2 H2O + 2 H(+)</text>
        <dbReference type="Rhea" id="RHEA:55448"/>
        <dbReference type="Rhea" id="RHEA-COMP:11964"/>
        <dbReference type="Rhea" id="RHEA-COMP:11965"/>
        <dbReference type="ChEBI" id="CHEBI:15377"/>
        <dbReference type="ChEBI" id="CHEBI:15378"/>
        <dbReference type="ChEBI" id="CHEBI:15379"/>
        <dbReference type="ChEBI" id="CHEBI:48025"/>
        <dbReference type="ChEBI" id="CHEBI:57618"/>
        <dbReference type="ChEBI" id="CHEBI:58210"/>
        <dbReference type="ChEBI" id="CHEBI:138897"/>
        <dbReference type="EC" id="1.14.14.81"/>
    </reaction>
</comment>
<comment type="cofactor">
    <cofactor evidence="1">
        <name>heme</name>
        <dbReference type="ChEBI" id="CHEBI:30413"/>
    </cofactor>
</comment>
<comment type="pathway">
    <text>Pigment biosynthesis; anthocyanin biosynthesis.</text>
</comment>
<comment type="tissue specificity">
    <text>Hypocotyl tissues.</text>
</comment>
<comment type="developmental stage">
    <text>Most abundant during the mid stage of flower bud development but not detected in leaf tissues.</text>
</comment>
<comment type="induction">
    <text>By white light.</text>
</comment>
<comment type="similarity">
    <text evidence="3">Belongs to the cytochrome P450 family.</text>
</comment>
<sequence length="513" mass="57784">MVILPSELIGATIIYIIVYIIIQKLIATGSWRRRRLPPGPEGWPVIGALPLLGGMPHVALAKMAKKYGPIMYLKVGTCGMVVASTPNAAKAFLKTLDINFSNRPPNAGATHMAYNAQDMVFAPYGPRWKLLRKLSNLHMLGGKALENWANVRANELGHMLKSMFDASHVGERIVVADMLTFAMANMIGQVMLSKRVFVEKGKEVNEFKNMVVELMTVAGYFNIGDFIPQIAWMDLQGIEKGMKKLHKKFDDLLTKMFEEHEATSNERKGKPDFLDFIMANRDNSEGERLSITNIKALLLNLFTAGTDTSSSVIEWALTEMMKNPTIFKKAQQEMDQIIGKNRRFIESDIPNLPYLRAICKEAFRKHPSTPLNLPRVSSDACTIDGYYIPKNTRLSVNIWAIGRDPDVWENPLEFIPERFLSEKNAKIEHRGNDFELIPFGAGRRICAGTRMGIVMVEYILGTLIHSFDWKLPNDVVDINMEETFGLALQKAVPLEAIVTPRLSFDIYQSSEPF</sequence>
<name>C75A2_SOLME</name>
<feature type="chain" id="PRO_0000052131" description="Flavonoid 3',5'-hydroxylase">
    <location>
        <begin position="1"/>
        <end position="513"/>
    </location>
</feature>
<feature type="binding site" description="axial binding residue" evidence="1">
    <location>
        <position position="446"/>
    </location>
    <ligand>
        <name>heme</name>
        <dbReference type="ChEBI" id="CHEBI:30413"/>
    </ligand>
    <ligandPart>
        <name>Fe</name>
        <dbReference type="ChEBI" id="CHEBI:18248"/>
    </ligandPart>
</feature>
<keyword id="KW-0349">Heme</keyword>
<keyword id="KW-0408">Iron</keyword>
<keyword id="KW-0479">Metal-binding</keyword>
<keyword id="KW-0503">Monooxygenase</keyword>
<keyword id="KW-0521">NADP</keyword>
<keyword id="KW-0560">Oxidoreductase</keyword>
<proteinExistence type="evidence at transcript level"/>
<evidence type="ECO:0000250" key="1"/>
<evidence type="ECO:0000250" key="2">
    <source>
        <dbReference type="UniProtKB" id="P48418"/>
    </source>
</evidence>
<evidence type="ECO:0000305" key="3"/>